<comment type="function">
    <text>With Ku forms a non-homologous end joining (NHEJ) repair enzyme which repairs blunt-end and 5'-overhang DNA double strand breaks (DSB) with about 50% fidelity, and DSB with non-complementary 3' ends. Plays a partial role in NHEJ during 3'-overhang repair. NHEJ repairs DSB with blunt ends and 5' overhangs with a high level of nucleotide insertion/deletion, without a need for microhomology. Acts as a DNA ligase on singly nicked dsDNA, as a DNA-directed DNA polymerase on 5' overhangs, and adds non-templated nucleotides to 3' overhangs (terminal transferase). Fills in gaps in dsDNA, prefers a 5'-phosphate in the gap. Site-directed mutations leading to ligase loss alter the bias from insertion to deletion mutations, and indicate another ligase (LigC1 and/or LigC2) can compensate.</text>
</comment>
<comment type="function">
    <text evidence="1 3 4 5 6 7 8 10">The preference of the polymerase domain for rNTPs over dNTPs may be advantageous in dormant cells, where the dNTP pool may be limiting.</text>
</comment>
<comment type="function">
    <text>The ligase activity is required for replication of viruses with short cos ends (4 bases) such as Mycobacterium phage Omega and Corndog, but not D29 which has a 9 base cos end. Stimulates dsDNA end joining by LigD; when expressed with endogenous or Mycobacterium phage Omega Ku, can reconstitute NHEJ in S.cerevisiae.</text>
</comment>
<comment type="catalytic activity">
    <reaction>
        <text>ATP + (deoxyribonucleotide)n-3'-hydroxyl + 5'-phospho-(deoxyribonucleotide)m = (deoxyribonucleotide)n+m + AMP + diphosphate.</text>
        <dbReference type="EC" id="6.5.1.1"/>
    </reaction>
</comment>
<comment type="cofactor">
    <cofactor evidence="1">
        <name>Mn(2+)</name>
        <dbReference type="ChEBI" id="CHEBI:29035"/>
    </cofactor>
    <text evidence="1">Binds 4 Mn(2+); 2 Mn(2+) for polymerase/primase activity, 1 each for 3-phosphoesterase and ligase.</text>
</comment>
<comment type="subunit">
    <text evidence="6 12">Interacts with Sir2 and probably also with Ku; may form a trimeric complex during NHEJ. Interacts with Mycobacterium phage Omega and Corndog Ku homologs (AC Q853W0, AC Q856K7).</text>
</comment>
<comment type="domain">
    <text evidence="7 10">The N-terminal divalent cation-dependent polymerase/primase domain (Pol) functions as an independent domain (PubMed:17174332). Deletion of the Pol domain (residues 1-288) yields a protein severely impaired in NHEJ on blunt or 5'-overhangs (PubMed:18281464).</text>
</comment>
<comment type="domain">
    <text evidence="7 10">The central 3'-phosphoesterase domain (PE) (PubMed:17174332). Mutations in the PE domain argue against this domain being involved in residue deletion during NHEJ (PubMed:18281464).</text>
</comment>
<comment type="domain">
    <text evidence="7 10">The C-terminal ATP-dependent ligase domain (Lig) functions as an independent domain (PubMed:17174332). Loss of the Lig domain (residues 449 to 762) forces NHEJ to rely on another ligase, which decreases fidelity for blunt and 5'-overhang DSB (PubMed:18281464).</text>
</comment>
<comment type="disruption phenotype">
    <text evidence="3 6 8 9 10 11">Not essential for growth in the absence of DNA damage. 320-fold reduction in NHEJ on blunt-ended DSB, with a loss of nucleotide insertions. 100-fold less efficient repair of 5'-overhang DSBs with little nucleotide insertion. Upon deletion, the fidelity of DNA repair depends on the form of the DSB; for blunt-ends fidelity is very low, for 5'-overhangs remains 50% faithful, for 3'-overhangs repair is fully faithful. NHEJ on blunt-ended plasmid is 24-fold further decreased in a triple ligC1-ligC2-ligD deletion. In quadruple ligB-ligC1-ligC2-ligD deletions NHEJ on blunt and 5'-overhangs is 0.22 and 0.12% of wild-type respectively; only 4-fold decrease in 3'-overhang NHEJ. 100-fold decrease in viability when exposed to ionizing radiation in late and stationary phase; 1000-fold decrease in a double ligD-ku deletion. Decreased resistance to desiccation-induced DSBs. Mycobacterium phage Omega and Corndog are unable to infect a deletion strain. Loss of NHEJ on incompatible 3'-chromosomal overhangs, partial reduction in single-strand annealing DSB repair.</text>
</comment>
<comment type="miscellaneous">
    <text>LigD has variable architecture; domain order can be permutated, domains can be independently encoded, while some bacteria lack the 3'-phosphoesterase domain entirely.</text>
</comment>
<comment type="similarity">
    <text evidence="13">In the N-terminal section; belongs to the LigD polymerase family.</text>
</comment>
<comment type="similarity">
    <text evidence="13">In the central section; belongs to the LigD 3'-phosphoesterase family.</text>
</comment>
<comment type="similarity">
    <text evidence="13">In the C-terminal section; belongs to the ATP-dependent DNA ligase family.</text>
</comment>
<comment type="sequence caution" evidence="13">
    <conflict type="erroneous initiation">
        <sequence resource="EMBL-CDS" id="ABK75957"/>
    </conflict>
    <text>Truncated N-terminus.</text>
</comment>
<protein>
    <recommendedName>
        <fullName>Multifunctional non-homologous end joining protein LigD</fullName>
    </recommendedName>
    <alternativeName>
        <fullName>NHEJ DNA polymerase</fullName>
    </alternativeName>
    <domain>
        <recommendedName>
            <fullName>DNA repair polymerase</fullName>
            <shortName>Pol</shortName>
        </recommendedName>
        <alternativeName>
            <fullName>Polymerase/primase</fullName>
        </alternativeName>
    </domain>
    <domain>
        <recommendedName>
            <fullName>3'-phosphoesterase</fullName>
            <shortName>3'-ribonuclease/3'-phosphatase</shortName>
            <shortName>PE</shortName>
        </recommendedName>
    </domain>
    <domain>
        <recommendedName>
            <fullName>DNA ligase</fullName>
            <shortName>Lig</shortName>
            <ecNumber>6.5.1.1</ecNumber>
        </recommendedName>
        <alternativeName>
            <fullName>Polydeoxyribonucleotide synthase [ATP]</fullName>
        </alternativeName>
    </domain>
</protein>
<gene>
    <name type="primary">ligD</name>
    <name type="ordered locus">MSMEG_5570</name>
    <name type="ordered locus">MSMEI_5419</name>
</gene>
<dbReference type="EC" id="6.5.1.1"/>
<dbReference type="EMBL" id="CP000480">
    <property type="protein sequence ID" value="ABK75957.1"/>
    <property type="status" value="ALT_INIT"/>
    <property type="molecule type" value="Genomic_DNA"/>
</dbReference>
<dbReference type="EMBL" id="CP001663">
    <property type="protein sequence ID" value="AFP41860.1"/>
    <property type="molecule type" value="Genomic_DNA"/>
</dbReference>
<dbReference type="RefSeq" id="YP_889805.1">
    <property type="nucleotide sequence ID" value="NC_008596.1"/>
</dbReference>
<dbReference type="SMR" id="A0R3R7"/>
<dbReference type="STRING" id="246196.MSMEG_5570"/>
<dbReference type="PaxDb" id="246196-MSMEI_5419"/>
<dbReference type="KEGG" id="msg:MSMEI_5419"/>
<dbReference type="KEGG" id="msm:MSMEG_5570"/>
<dbReference type="PATRIC" id="fig|246196.19.peg.5431"/>
<dbReference type="eggNOG" id="COG1793">
    <property type="taxonomic scope" value="Bacteria"/>
</dbReference>
<dbReference type="eggNOG" id="COG3285">
    <property type="taxonomic scope" value="Bacteria"/>
</dbReference>
<dbReference type="OrthoDB" id="9802472at2"/>
<dbReference type="Proteomes" id="UP000000757">
    <property type="component" value="Chromosome"/>
</dbReference>
<dbReference type="Proteomes" id="UP000006158">
    <property type="component" value="Chromosome"/>
</dbReference>
<dbReference type="GO" id="GO:0005524">
    <property type="term" value="F:ATP binding"/>
    <property type="evidence" value="ECO:0007669"/>
    <property type="project" value="UniProtKB-KW"/>
</dbReference>
<dbReference type="GO" id="GO:0003677">
    <property type="term" value="F:DNA binding"/>
    <property type="evidence" value="ECO:0007669"/>
    <property type="project" value="UniProtKB-KW"/>
</dbReference>
<dbReference type="GO" id="GO:0003910">
    <property type="term" value="F:DNA ligase (ATP) activity"/>
    <property type="evidence" value="ECO:0007669"/>
    <property type="project" value="UniProtKB-EC"/>
</dbReference>
<dbReference type="GO" id="GO:0003887">
    <property type="term" value="F:DNA-directed DNA polymerase activity"/>
    <property type="evidence" value="ECO:0007669"/>
    <property type="project" value="UniProtKB-KW"/>
</dbReference>
<dbReference type="GO" id="GO:0004527">
    <property type="term" value="F:exonuclease activity"/>
    <property type="evidence" value="ECO:0007669"/>
    <property type="project" value="UniProtKB-KW"/>
</dbReference>
<dbReference type="GO" id="GO:0046872">
    <property type="term" value="F:metal ion binding"/>
    <property type="evidence" value="ECO:0007669"/>
    <property type="project" value="UniProtKB-KW"/>
</dbReference>
<dbReference type="GO" id="GO:0006310">
    <property type="term" value="P:DNA recombination"/>
    <property type="evidence" value="ECO:0007669"/>
    <property type="project" value="UniProtKB-KW"/>
</dbReference>
<dbReference type="GO" id="GO:0006303">
    <property type="term" value="P:double-strand break repair via nonhomologous end joining"/>
    <property type="evidence" value="ECO:0000315"/>
    <property type="project" value="UniProtKB"/>
</dbReference>
<dbReference type="CDD" id="cd07906">
    <property type="entry name" value="Adenylation_DNA_ligase_LigD_LigC"/>
    <property type="match status" value="1"/>
</dbReference>
<dbReference type="CDD" id="cd04863">
    <property type="entry name" value="MtLigD_Pol_like"/>
    <property type="match status" value="1"/>
</dbReference>
<dbReference type="CDD" id="cd07971">
    <property type="entry name" value="OBF_DNA_ligase_LigD"/>
    <property type="match status" value="1"/>
</dbReference>
<dbReference type="FunFam" id="2.40.50.140:FF:000292">
    <property type="entry name" value="Probable ATP-dependent DNA ligase"/>
    <property type="match status" value="1"/>
</dbReference>
<dbReference type="Gene3D" id="3.30.1490.70">
    <property type="match status" value="1"/>
</dbReference>
<dbReference type="Gene3D" id="3.30.470.30">
    <property type="entry name" value="DNA ligase/mRNA capping enzyme"/>
    <property type="match status" value="1"/>
</dbReference>
<dbReference type="Gene3D" id="3.90.920.10">
    <property type="entry name" value="DNA primase, PRIM domain"/>
    <property type="match status" value="1"/>
</dbReference>
<dbReference type="Gene3D" id="2.40.50.140">
    <property type="entry name" value="Nucleic acid-binding proteins"/>
    <property type="match status" value="1"/>
</dbReference>
<dbReference type="InterPro" id="IPR012309">
    <property type="entry name" value="DNA_ligase_ATP-dep_C"/>
</dbReference>
<dbReference type="InterPro" id="IPR012310">
    <property type="entry name" value="DNA_ligase_ATP-dep_cent"/>
</dbReference>
<dbReference type="InterPro" id="IPR014146">
    <property type="entry name" value="LigD_ligase_dom"/>
</dbReference>
<dbReference type="InterPro" id="IPR014144">
    <property type="entry name" value="LigD_PE_domain"/>
</dbReference>
<dbReference type="InterPro" id="IPR014145">
    <property type="entry name" value="LigD_pol_dom"/>
</dbReference>
<dbReference type="InterPro" id="IPR033649">
    <property type="entry name" value="MtLigD_Pol-like"/>
</dbReference>
<dbReference type="InterPro" id="IPR012340">
    <property type="entry name" value="NA-bd_OB-fold"/>
</dbReference>
<dbReference type="InterPro" id="IPR052171">
    <property type="entry name" value="NHEJ_LigD"/>
</dbReference>
<dbReference type="NCBIfam" id="TIGR02777">
    <property type="entry name" value="LigD_PE_dom"/>
    <property type="match status" value="1"/>
</dbReference>
<dbReference type="NCBIfam" id="TIGR02778">
    <property type="entry name" value="ligD_pol"/>
    <property type="match status" value="1"/>
</dbReference>
<dbReference type="NCBIfam" id="TIGR02779">
    <property type="entry name" value="NHEJ_ligase_lig"/>
    <property type="match status" value="1"/>
</dbReference>
<dbReference type="NCBIfam" id="NF007210">
    <property type="entry name" value="PRK09632.1"/>
    <property type="match status" value="1"/>
</dbReference>
<dbReference type="PANTHER" id="PTHR42705">
    <property type="entry name" value="BIFUNCTIONAL NON-HOMOLOGOUS END JOINING PROTEIN LIGD"/>
    <property type="match status" value="1"/>
</dbReference>
<dbReference type="PANTHER" id="PTHR42705:SF2">
    <property type="entry name" value="BIFUNCTIONAL NON-HOMOLOGOUS END JOINING PROTEIN LIGD"/>
    <property type="match status" value="1"/>
</dbReference>
<dbReference type="Pfam" id="PF04679">
    <property type="entry name" value="DNA_ligase_A_C"/>
    <property type="match status" value="1"/>
</dbReference>
<dbReference type="Pfam" id="PF01068">
    <property type="entry name" value="DNA_ligase_A_M"/>
    <property type="match status" value="1"/>
</dbReference>
<dbReference type="Pfam" id="PF13298">
    <property type="entry name" value="LigD_N"/>
    <property type="match status" value="1"/>
</dbReference>
<dbReference type="Pfam" id="PF21686">
    <property type="entry name" value="LigD_Prim-Pol"/>
    <property type="match status" value="1"/>
</dbReference>
<dbReference type="SUPFAM" id="SSF56091">
    <property type="entry name" value="DNA ligase/mRNA capping enzyme, catalytic domain"/>
    <property type="match status" value="1"/>
</dbReference>
<dbReference type="SUPFAM" id="SSF50249">
    <property type="entry name" value="Nucleic acid-binding proteins"/>
    <property type="match status" value="1"/>
</dbReference>
<dbReference type="PROSITE" id="PS50160">
    <property type="entry name" value="DNA_LIGASE_A3"/>
    <property type="match status" value="1"/>
</dbReference>
<keyword id="KW-0067">ATP-binding</keyword>
<keyword id="KW-0227">DNA damage</keyword>
<keyword id="KW-0233">DNA recombination</keyword>
<keyword id="KW-0234">DNA repair</keyword>
<keyword id="KW-0238">DNA-binding</keyword>
<keyword id="KW-0239">DNA-directed DNA polymerase</keyword>
<keyword id="KW-0269">Exonuclease</keyword>
<keyword id="KW-0945">Host-virus interaction</keyword>
<keyword id="KW-0378">Hydrolase</keyword>
<keyword id="KW-0436">Ligase</keyword>
<keyword id="KW-0464">Manganese</keyword>
<keyword id="KW-0479">Metal-binding</keyword>
<keyword id="KW-0511">Multifunctional enzyme</keyword>
<keyword id="KW-0540">Nuclease</keyword>
<keyword id="KW-0547">Nucleotide-binding</keyword>
<keyword id="KW-0548">Nucleotidyltransferase</keyword>
<keyword id="KW-1185">Reference proteome</keyword>
<keyword id="KW-0808">Transferase</keyword>
<reference key="1">
    <citation type="submission" date="2006-10" db="EMBL/GenBank/DDBJ databases">
        <authorList>
            <person name="Fleischmann R.D."/>
            <person name="Dodson R.J."/>
            <person name="Haft D.H."/>
            <person name="Merkel J.S."/>
            <person name="Nelson W.C."/>
            <person name="Fraser C.M."/>
        </authorList>
    </citation>
    <scope>NUCLEOTIDE SEQUENCE [LARGE SCALE GENOMIC DNA]</scope>
    <source>
        <strain>ATCC 700084 / mc(2)155</strain>
    </source>
</reference>
<reference key="2">
    <citation type="journal article" date="2007" name="Genome Biol.">
        <title>Interrupted coding sequences in Mycobacterium smegmatis: authentic mutations or sequencing errors?</title>
        <authorList>
            <person name="Deshayes C."/>
            <person name="Perrodou E."/>
            <person name="Gallien S."/>
            <person name="Euphrasie D."/>
            <person name="Schaeffer C."/>
            <person name="Van-Dorsselaer A."/>
            <person name="Poch O."/>
            <person name="Lecompte O."/>
            <person name="Reyrat J.-M."/>
        </authorList>
    </citation>
    <scope>NUCLEOTIDE SEQUENCE [LARGE SCALE GENOMIC DNA]</scope>
    <source>
        <strain>ATCC 700084 / mc(2)155</strain>
    </source>
</reference>
<reference key="3">
    <citation type="journal article" date="2009" name="Genome Res.">
        <title>Ortho-proteogenomics: multiple proteomes investigation through orthology and a new MS-based protocol.</title>
        <authorList>
            <person name="Gallien S."/>
            <person name="Perrodou E."/>
            <person name="Carapito C."/>
            <person name="Deshayes C."/>
            <person name="Reyrat J.-M."/>
            <person name="Van Dorsselaer A."/>
            <person name="Poch O."/>
            <person name="Schaeffer C."/>
            <person name="Lecompte O."/>
        </authorList>
    </citation>
    <scope>NUCLEOTIDE SEQUENCE [LARGE SCALE GENOMIC DNA]</scope>
    <source>
        <strain>ATCC 700084 / mc(2)155</strain>
    </source>
</reference>
<reference key="4">
    <citation type="journal article" date="2005" name="Nat. Struct. Mol. Biol.">
        <title>Mechanism of nonhomologous end-joining in mycobacteria: a low-fidelity repair system driven by Ku, ligase D and ligase C.</title>
        <authorList>
            <person name="Gong C."/>
            <person name="Bongiorno P."/>
            <person name="Martins A."/>
            <person name="Stephanou N.C."/>
            <person name="Zhu H."/>
            <person name="Shuman S."/>
            <person name="Glickman M.S."/>
        </authorList>
    </citation>
    <scope>FUNCTION</scope>
    <scope>DISRUPTION PHENOTYPE</scope>
    <scope>MUTAGENESIS OF ASP-136 AND ASP-138</scope>
    <source>
        <strain>ATCC 700084 / mc(2)155</strain>
    </source>
</reference>
<reference key="5">
    <citation type="journal article" date="2006" name="J. Biol. Chem.">
        <title>Crystal structure and nonhomologous end-joining function of the ligase component of Mycobacterium DNA ligase D.</title>
        <authorList>
            <person name="Akey D."/>
            <person name="Martins A."/>
            <person name="Aniukwu J."/>
            <person name="Glickman M.S."/>
            <person name="Shuman S."/>
            <person name="Berger J.M."/>
        </authorList>
    </citation>
    <scope>FUNCTION</scope>
    <scope>PROBABLE ACTIVE SITE</scope>
    <scope>MUTAGENESIS OF LYS-484</scope>
    <source>
        <strain>ATCC 700084 / mc(2)155</strain>
    </source>
</reference>
<reference key="6">
    <citation type="journal article" date="2006" name="Mol. Cell">
        <title>Mycobacteriophage exploit NHEJ to facilitate genome circularization.</title>
        <authorList>
            <person name="Pitcher R.S."/>
            <person name="Tonkin L.M."/>
            <person name="Daley J.M."/>
            <person name="Palmbos P.L."/>
            <person name="Green A.J."/>
            <person name="Velting T.L."/>
            <person name="Brzostek A."/>
            <person name="Korycka-Machala M."/>
            <person name="Cresawn S."/>
            <person name="Dziadek J."/>
            <person name="Hatfull G.F."/>
            <person name="Wilson T.E."/>
            <person name="Doherty A.J."/>
        </authorList>
    </citation>
    <scope>FUNCTION IN VIRAL REPLICATION</scope>
    <scope>INTERACTION WITH VIRAL KU HOMOLOGS</scope>
    <scope>DISRUPTION PHENOTYPE</scope>
    <scope>MUTAGENESIS OF 136-ASP--ASP-138 AND LYS-484</scope>
    <source>
        <strain>ATCC 700084 / mc(2)155</strain>
    </source>
</reference>
<reference key="7">
    <citation type="journal article" date="2006" name="Proc. Natl. Acad. Sci. U.S.A.">
        <title>Atomic structure and nonhomologous end-joining function of the polymerase component of bacterial DNA ligase D.</title>
        <authorList>
            <person name="Zhu H."/>
            <person name="Nandakumar J."/>
            <person name="Aniukwu J."/>
            <person name="Wang L.K."/>
            <person name="Glickman M.S."/>
            <person name="Lima C.D."/>
            <person name="Shuman S."/>
        </authorList>
    </citation>
    <scope>FUNCTION</scope>
    <scope>MUTAGENESIS OF 136-ASP--ASP-138</scope>
</reference>
<reference key="8">
    <citation type="journal article" date="2007" name="DNA Repair">
        <title>NHEJ protects mycobacteria in stationary phase against the harmful effects of desiccation.</title>
        <authorList>
            <person name="Pitcher R.S."/>
            <person name="Green A.J."/>
            <person name="Brzostek A."/>
            <person name="Korycka-Machala M."/>
            <person name="Dziadek J."/>
            <person name="Doherty A.J."/>
        </authorList>
    </citation>
    <scope>FUNCTION</scope>
    <scope>DISRUPTION PHENOTYPE</scope>
    <source>
        <strain>ATCC 700084 / mc(2)155</strain>
    </source>
</reference>
<reference key="9">
    <citation type="journal article" date="2007" name="J. Bacteriol.">
        <title>Mycobacterial nonhomologous end joining mediates mutagenic repair of chromosomal double-strand DNA breaks.</title>
        <authorList>
            <person name="Stephanou N.C."/>
            <person name="Gao F."/>
            <person name="Bongiorno P."/>
            <person name="Ehrt S."/>
            <person name="Schnappinger D."/>
            <person name="Shuman S."/>
            <person name="Glickman M.S."/>
        </authorList>
    </citation>
    <scope>DISRUPTION PHENOTYPE</scope>
    <source>
        <strain>ATCC 700084 / mc(2)155</strain>
    </source>
</reference>
<reference key="10">
    <citation type="journal article" date="2007" name="J. Mol. Biol.">
        <title>Structure and function of a mycobacterial NHEJ DNA repair polymerase.</title>
        <authorList>
            <person name="Pitcher R.S."/>
            <person name="Brissett N.C."/>
            <person name="Picher A.J."/>
            <person name="Andrade P."/>
            <person name="Juarez R."/>
            <person name="Thompson D."/>
            <person name="Fox G.C."/>
            <person name="Blanco L."/>
            <person name="Doherty A.J."/>
        </authorList>
    </citation>
    <scope>FUNCTION IN GAP FILLING</scope>
    <scope>COFACTOR</scope>
    <scope>DOMAIN</scope>
    <scope>DNA-BINDING</scope>
</reference>
<reference key="11">
    <citation type="journal article" date="2008" name="Genes Dev.">
        <title>The pathways and outcomes of mycobacterial NHEJ depend on the structure of the broken DNA ends.</title>
        <authorList>
            <person name="Aniukwu J."/>
            <person name="Glickman M.S."/>
            <person name="Shuman S."/>
        </authorList>
    </citation>
    <scope>FUNCTION</scope>
    <scope>DOMAIN</scope>
    <scope>DISRUPTION PHENOTYPE</scope>
    <scope>MUTAGENESIS OF 136-ASP--ASP-138; GLU-310; HIS-336; LYS-484 AND GLU-533</scope>
    <source>
        <strain>ATCC 700084 / mc(2)155</strain>
    </source>
</reference>
<reference key="12">
    <citation type="journal article" date="2011" name="Mol. Microbiol.">
        <title>Mycobacteria exploit three genetically distinct DNA double-strand break repair pathways.</title>
        <authorList>
            <person name="Gupta R."/>
            <person name="Barkan D."/>
            <person name="Redelman-Sidi G."/>
            <person name="Shuman S."/>
            <person name="Glickman M.S."/>
        </authorList>
    </citation>
    <scope>DISRUPTION PHENOTYPE</scope>
    <source>
        <strain>ATCC 700084 / mc(2)155</strain>
    </source>
</reference>
<reference key="13">
    <citation type="journal article" date="2011" name="PLoS ONE">
        <title>A Sir2-like protein participates in mycobacterial NHEJ.</title>
        <authorList>
            <person name="Li Z."/>
            <person name="Wen J."/>
            <person name="Lin Y."/>
            <person name="Wang S."/>
            <person name="Xue P."/>
            <person name="Zhang Z."/>
            <person name="Zhou Y."/>
            <person name="Wang X."/>
            <person name="Sui L."/>
            <person name="Bi L.J."/>
            <person name="Zhang X.E."/>
        </authorList>
    </citation>
    <scope>INTERACTION WITH SIR2</scope>
    <scope>SUBUNIT</scope>
    <source>
        <strain>ATCC 700084 / mc(2)155</strain>
    </source>
</reference>
<organism>
    <name type="scientific">Mycolicibacterium smegmatis (strain ATCC 700084 / mc(2)155)</name>
    <name type="common">Mycobacterium smegmatis</name>
    <dbReference type="NCBI Taxonomy" id="246196"/>
    <lineage>
        <taxon>Bacteria</taxon>
        <taxon>Bacillati</taxon>
        <taxon>Actinomycetota</taxon>
        <taxon>Actinomycetes</taxon>
        <taxon>Mycobacteriales</taxon>
        <taxon>Mycobacteriaceae</taxon>
        <taxon>Mycolicibacterium</taxon>
    </lineage>
</organism>
<sequence>MARHPWGMERYERVRLTNPDKVLYPATGTTKAEVFDYYLSIAQVMVPHIAGRPVTRKRWPNGVAEEAFFEKQLASSAPSWLERGSITHKSGTTTYPIINTREGLAWVAQQASLEVHVPQWRFEDGDQGPATRIVFDLDPGEGVTMTQLCEIAHEVRALMTDLDLETYPLTSGSKGLHLYVPLAEPISSRGASVLARRVAQQLEQAMPKLVTATMTKSLRAGKVFLDWSQNNAAKTTIAPYSLRGRDHPTVAAPRTWDEIADPELRHLRFDEVLDRLDEYGDLLAPLDADAPIADKLTTYRSMRDASKTPEPVPKEIPKTGNNDKFVIQEHHARRLHYDLRLERDGVLVSFAVPKNLPETTAENRLAVHTEDHPIEYLAFHGSIPKGEYGAGDMVIWDSGSYETEKFRVPEELDNPDDSHGEIIVTLHGEKVDGRYALIQTKGKNWLAHRMKDQKNARPEDFAPMLATEGSVAKYKAKQWAFEGKWDGYRVIIDADHGQLQIRSRTGREVTGEYPQFKALAADLAEHHVVLDGEAVALDESGVPSFGQMQNRARSTRVEFWAFDILWLDGRSLLRAKYSDRRKILEALADGGGLIVPDQLPGDGPEAMEHVRKKRFEGVVAKKWDSTYQPGRRSSSWIKDKIWNTQEVVIGGWRQGEGGRSSGIGALVLGIPGPEGLQFVGRVGTGFTEKELSKLKDMLKPLHTDESPFNAPLPKVDARGVTFVRPELVGEVRYSERTSDGRLRQPSWRGLRPDKTPDEVVWE</sequence>
<feature type="chain" id="PRO_0000425949" description="Multifunctional non-homologous end joining protein LigD">
    <location>
        <begin position="1"/>
        <end position="762"/>
    </location>
</feature>
<feature type="DNA-binding region" evidence="1">
    <location>
        <begin position="18"/>
        <end position="21"/>
    </location>
</feature>
<feature type="DNA-binding region" evidence="1">
    <location>
        <position position="31"/>
    </location>
</feature>
<feature type="DNA-binding region" evidence="1">
    <location>
        <begin position="58"/>
        <end position="60"/>
    </location>
</feature>
<feature type="DNA-binding region" evidence="1">
    <location>
        <begin position="68"/>
        <end position="72"/>
    </location>
</feature>
<feature type="DNA-binding region" evidence="1">
    <location>
        <position position="76"/>
    </location>
</feature>
<feature type="DNA-binding region" evidence="1">
    <location>
        <begin position="88"/>
        <end position="93"/>
    </location>
</feature>
<feature type="DNA-binding region" evidence="1">
    <location>
        <position position="109"/>
    </location>
</feature>
<feature type="DNA-binding region" evidence="1">
    <location>
        <begin position="233"/>
        <end position="234"/>
    </location>
</feature>
<feature type="region of interest" description="DNA repair polymerase domain (Pol)">
    <location>
        <begin position="14"/>
        <end position="260"/>
    </location>
</feature>
<feature type="region of interest" description="3'-phosphoesterase domain (PE)">
    <location>
        <begin position="296"/>
        <end position="453"/>
    </location>
</feature>
<feature type="region of interest" description="Ligase domain (Lig)">
    <location>
        <begin position="463"/>
        <end position="760"/>
    </location>
</feature>
<feature type="region of interest" description="Disordered" evidence="2">
    <location>
        <begin position="735"/>
        <end position="762"/>
    </location>
</feature>
<feature type="compositionally biased region" description="Basic and acidic residues" evidence="2">
    <location>
        <begin position="750"/>
        <end position="762"/>
    </location>
</feature>
<feature type="active site" description="N6-AMP-lysine intermediate" evidence="13">
    <location>
        <position position="484"/>
    </location>
</feature>
<feature type="binding site" evidence="1">
    <location>
        <position position="57"/>
    </location>
    <ligand>
        <name>substrate</name>
        <note>for polymerase activity</note>
    </ligand>
</feature>
<feature type="binding site" evidence="1">
    <location>
        <position position="116"/>
    </location>
    <ligand>
        <name>substrate</name>
        <note>for polymerase activity</note>
    </ligand>
</feature>
<feature type="binding site" evidence="1">
    <location>
        <begin position="136"/>
        <end position="138"/>
    </location>
    <ligand>
        <name>substrate</name>
        <note>for polymerase activity</note>
    </ligand>
</feature>
<feature type="binding site" evidence="1">
    <location>
        <position position="136"/>
    </location>
    <ligand>
        <name>Mn(2+)</name>
        <dbReference type="ChEBI" id="CHEBI:29035"/>
        <label>1</label>
    </ligand>
</feature>
<feature type="binding site" evidence="1">
    <location>
        <position position="136"/>
    </location>
    <ligand>
        <name>Mn(2+)</name>
        <dbReference type="ChEBI" id="CHEBI:29035"/>
        <label>2</label>
    </ligand>
</feature>
<feature type="binding site" evidence="1">
    <location>
        <position position="138"/>
    </location>
    <ligand>
        <name>Mn(2+)</name>
        <dbReference type="ChEBI" id="CHEBI:29035"/>
        <label>1</label>
    </ligand>
</feature>
<feature type="binding site" evidence="1">
    <location>
        <position position="138"/>
    </location>
    <ligand>
        <name>Mn(2+)</name>
        <dbReference type="ChEBI" id="CHEBI:29035"/>
        <label>2</label>
    </ligand>
</feature>
<feature type="binding site" evidence="1">
    <location>
        <begin position="171"/>
        <end position="177"/>
    </location>
    <ligand>
        <name>substrate</name>
        <note>for polymerase activity</note>
    </ligand>
</feature>
<feature type="binding site" evidence="1">
    <location>
        <position position="226"/>
    </location>
    <ligand>
        <name>Mn(2+)</name>
        <dbReference type="ChEBI" id="CHEBI:29035"/>
        <label>2</label>
    </ligand>
</feature>
<feature type="binding site" evidence="1">
    <location>
        <position position="229"/>
    </location>
    <ligand>
        <name>substrate</name>
        <note>for polymerase activity</note>
    </ligand>
</feature>
<feature type="binding site" evidence="1">
    <location>
        <position position="235"/>
    </location>
    <ligand>
        <name>substrate</name>
        <note>for polymerase activity</note>
    </ligand>
</feature>
<feature type="binding site" evidence="1">
    <location>
        <position position="243"/>
    </location>
    <ligand>
        <name>substrate</name>
        <note>for polymerase activity</note>
    </ligand>
</feature>
<feature type="binding site" evidence="1">
    <location>
        <position position="330"/>
    </location>
    <ligand>
        <name>Mn(2+)</name>
        <dbReference type="ChEBI" id="CHEBI:29035"/>
        <label>3</label>
        <note>catalytic; for 3'-phosphoesterase activity</note>
    </ligand>
</feature>
<feature type="binding site" evidence="1">
    <location>
        <position position="336"/>
    </location>
    <ligand>
        <name>Mn(2+)</name>
        <dbReference type="ChEBI" id="CHEBI:29035"/>
        <label>3</label>
        <note>catalytic; for 3'-phosphoesterase activity</note>
    </ligand>
</feature>
<feature type="binding site" evidence="1">
    <location>
        <position position="338"/>
    </location>
    <ligand>
        <name>Mn(2+)</name>
        <dbReference type="ChEBI" id="CHEBI:29035"/>
        <label>3</label>
        <note>catalytic; for 3'-phosphoesterase activity</note>
    </ligand>
</feature>
<feature type="binding site" evidence="1">
    <location>
        <position position="486"/>
    </location>
    <ligand>
        <name>Mn(2+)</name>
        <dbReference type="ChEBI" id="CHEBI:29035"/>
        <label>4</label>
    </ligand>
</feature>
<feature type="binding site" evidence="1">
    <location>
        <position position="616"/>
    </location>
    <ligand>
        <name>Mn(2+)</name>
        <dbReference type="ChEBI" id="CHEBI:29035"/>
        <label>4</label>
    </ligand>
</feature>
<feature type="site" description="Transition state stabilizer; for 3'-phosphoesterase activity" evidence="1">
    <location>
        <position position="372"/>
    </location>
</feature>
<feature type="mutagenesis site" description="In vivo 30% reduction in NHEJ on blunt-end DSB, fidelity doubles, loss of non-templated nucleotide insertion during NHEJ. No effect on efficiency of DSB on 5'- or 3'-overhangs, increased fidelity on 5'-overhangs. No effect on viral infection." evidence="4 6 10">
    <original>DLD</original>
    <variation>ALA</variation>
    <location>
        <begin position="136"/>
        <end position="138"/>
    </location>
</feature>
<feature type="mutagenesis site" description="Loss of templated and non-templated DNA synthesis, but not ligase activity." evidence="3">
    <original>D</original>
    <variation>A</variation>
    <location>
        <position position="136"/>
    </location>
</feature>
<feature type="mutagenesis site" description="Loss of templated and non-templated DNA synthesis, but not ligase activity." evidence="3">
    <original>D</original>
    <variation>A</variation>
    <location>
        <position position="138"/>
    </location>
</feature>
<feature type="mutagenesis site" description="No effect on efficiency or fidelity on NHEJ of blunt, 5'-overhangs or 3'-overhangs." evidence="10">
    <original>E</original>
    <variation>A</variation>
    <location>
        <position position="310"/>
    </location>
</feature>
<feature type="mutagenesis site" description="No effect on efficiency or fidelity on NHEJ of blunt, 5'-overhangs or 3'-overhangs." evidence="10">
    <original>H</original>
    <variation>A</variation>
    <location>
        <position position="336"/>
    </location>
</feature>
<feature type="mutagenesis site" description="2.7 and 3.7-fold decrease in efficiency of NHEJ on blunt and 5'-overhangs respectively. Considerably decreases NHEJ fidelity on both DSBs. No viral infection." evidence="5 6 10">
    <original>K</original>
    <variation>A</variation>
    <location>
        <position position="484"/>
    </location>
</feature>
<feature type="mutagenesis site" description="3-fold and 9-fold decrease in efficiency of NHEJ on blunt and 5'-overhangs respectively, with very decreased fidelity on both DSBs. No viral infection." evidence="10">
    <original>E</original>
    <variation>A</variation>
    <location>
        <position position="533"/>
    </location>
</feature>
<name>LIGD_MYCS2</name>
<accession>A0R3R7</accession>
<accession>I7FKR9</accession>
<evidence type="ECO:0000250" key="1"/>
<evidence type="ECO:0000256" key="2">
    <source>
        <dbReference type="SAM" id="MobiDB-lite"/>
    </source>
</evidence>
<evidence type="ECO:0000269" key="3">
    <source>
    </source>
</evidence>
<evidence type="ECO:0000269" key="4">
    <source>
    </source>
</evidence>
<evidence type="ECO:0000269" key="5">
    <source>
    </source>
</evidence>
<evidence type="ECO:0000269" key="6">
    <source>
    </source>
</evidence>
<evidence type="ECO:0000269" key="7">
    <source>
    </source>
</evidence>
<evidence type="ECO:0000269" key="8">
    <source>
    </source>
</evidence>
<evidence type="ECO:0000269" key="9">
    <source>
    </source>
</evidence>
<evidence type="ECO:0000269" key="10">
    <source>
    </source>
</evidence>
<evidence type="ECO:0000269" key="11">
    <source>
    </source>
</evidence>
<evidence type="ECO:0000269" key="12">
    <source>
    </source>
</evidence>
<evidence type="ECO:0000305" key="13"/>
<proteinExistence type="evidence at protein level"/>